<proteinExistence type="inferred from homology"/>
<sequence length="191" mass="20956">MKVILASASERRQELLKRIIDDFEIIVSDFDESTVKFNGDFSVYVQELAKGKAESVAKDIKEDAIVIGCDTIVAFNGKVLGKPKDETHAFNMLKALSGNVHSVYSGIAVLDTKNNNISTESVCTNVKFSTITNEKINKYISTKEPMDKAGAYGIQGLGGVFVEEINGDYYNVVGLPLNRLYKIFGDMGVNL</sequence>
<keyword id="KW-0963">Cytoplasm</keyword>
<keyword id="KW-0378">Hydrolase</keyword>
<keyword id="KW-0546">Nucleotide metabolism</keyword>
<keyword id="KW-1185">Reference proteome</keyword>
<gene>
    <name type="ordered locus">NT01CX_1686</name>
</gene>
<name>NTPPA_CLONN</name>
<protein>
    <recommendedName>
        <fullName evidence="1">dTTP/UTP pyrophosphatase</fullName>
        <shortName evidence="1">dTTPase/UTPase</shortName>
        <ecNumber evidence="1">3.6.1.9</ecNumber>
    </recommendedName>
    <alternativeName>
        <fullName evidence="1">Nucleoside triphosphate pyrophosphatase</fullName>
    </alternativeName>
    <alternativeName>
        <fullName evidence="1">Nucleotide pyrophosphatase</fullName>
        <shortName evidence="1">Nucleotide PPase</shortName>
    </alternativeName>
</protein>
<dbReference type="EC" id="3.6.1.9" evidence="1"/>
<dbReference type="EMBL" id="CP000382">
    <property type="protein sequence ID" value="ABK60750.1"/>
    <property type="molecule type" value="Genomic_DNA"/>
</dbReference>
<dbReference type="RefSeq" id="WP_011721772.1">
    <property type="nucleotide sequence ID" value="NC_008593.1"/>
</dbReference>
<dbReference type="SMR" id="A0PZG3"/>
<dbReference type="STRING" id="386415.NT01CX_1686"/>
<dbReference type="KEGG" id="cno:NT01CX_1686"/>
<dbReference type="eggNOG" id="COG0424">
    <property type="taxonomic scope" value="Bacteria"/>
</dbReference>
<dbReference type="HOGENOM" id="CLU_040416_0_0_9"/>
<dbReference type="Proteomes" id="UP000008220">
    <property type="component" value="Chromosome"/>
</dbReference>
<dbReference type="GO" id="GO:0005737">
    <property type="term" value="C:cytoplasm"/>
    <property type="evidence" value="ECO:0007669"/>
    <property type="project" value="UniProtKB-SubCell"/>
</dbReference>
<dbReference type="GO" id="GO:0036218">
    <property type="term" value="F:dTTP diphosphatase activity"/>
    <property type="evidence" value="ECO:0007669"/>
    <property type="project" value="RHEA"/>
</dbReference>
<dbReference type="GO" id="GO:0036221">
    <property type="term" value="F:UTP diphosphatase activity"/>
    <property type="evidence" value="ECO:0007669"/>
    <property type="project" value="RHEA"/>
</dbReference>
<dbReference type="GO" id="GO:0009117">
    <property type="term" value="P:nucleotide metabolic process"/>
    <property type="evidence" value="ECO:0007669"/>
    <property type="project" value="UniProtKB-KW"/>
</dbReference>
<dbReference type="CDD" id="cd00555">
    <property type="entry name" value="Maf"/>
    <property type="match status" value="1"/>
</dbReference>
<dbReference type="Gene3D" id="3.90.950.10">
    <property type="match status" value="1"/>
</dbReference>
<dbReference type="HAMAP" id="MF_00528">
    <property type="entry name" value="Maf"/>
    <property type="match status" value="1"/>
</dbReference>
<dbReference type="InterPro" id="IPR029001">
    <property type="entry name" value="ITPase-like_fam"/>
</dbReference>
<dbReference type="InterPro" id="IPR003697">
    <property type="entry name" value="Maf-like"/>
</dbReference>
<dbReference type="NCBIfam" id="TIGR00172">
    <property type="entry name" value="maf"/>
    <property type="match status" value="1"/>
</dbReference>
<dbReference type="NCBIfam" id="NF000867">
    <property type="entry name" value="PRK00078.1"/>
    <property type="match status" value="1"/>
</dbReference>
<dbReference type="PANTHER" id="PTHR43213">
    <property type="entry name" value="BIFUNCTIONAL DTTP/UTP PYROPHOSPHATASE/METHYLTRANSFERASE PROTEIN-RELATED"/>
    <property type="match status" value="1"/>
</dbReference>
<dbReference type="PANTHER" id="PTHR43213:SF5">
    <property type="entry name" value="BIFUNCTIONAL DTTP_UTP PYROPHOSPHATASE_METHYLTRANSFERASE PROTEIN-RELATED"/>
    <property type="match status" value="1"/>
</dbReference>
<dbReference type="Pfam" id="PF02545">
    <property type="entry name" value="Maf"/>
    <property type="match status" value="1"/>
</dbReference>
<dbReference type="PIRSF" id="PIRSF006305">
    <property type="entry name" value="Maf"/>
    <property type="match status" value="1"/>
</dbReference>
<dbReference type="SUPFAM" id="SSF52972">
    <property type="entry name" value="ITPase-like"/>
    <property type="match status" value="1"/>
</dbReference>
<accession>A0PZG3</accession>
<evidence type="ECO:0000255" key="1">
    <source>
        <dbReference type="HAMAP-Rule" id="MF_00528"/>
    </source>
</evidence>
<reference key="1">
    <citation type="journal article" date="2006" name="Nat. Biotechnol.">
        <title>The genome and transcriptomes of the anti-tumor agent Clostridium novyi-NT.</title>
        <authorList>
            <person name="Bettegowda C."/>
            <person name="Huang X."/>
            <person name="Lin J."/>
            <person name="Cheong I."/>
            <person name="Kohli M."/>
            <person name="Szabo S.A."/>
            <person name="Zhang X."/>
            <person name="Diaz L.A. Jr."/>
            <person name="Velculescu V.E."/>
            <person name="Parmigiani G."/>
            <person name="Kinzler K.W."/>
            <person name="Vogelstein B."/>
            <person name="Zhou S."/>
        </authorList>
    </citation>
    <scope>NUCLEOTIDE SEQUENCE [LARGE SCALE GENOMIC DNA]</scope>
    <source>
        <strain>NT</strain>
    </source>
</reference>
<comment type="function">
    <text evidence="1">Nucleoside triphosphate pyrophosphatase that hydrolyzes dTTP and UTP. May have a dual role in cell division arrest and in preventing the incorporation of modified nucleotides into cellular nucleic acids.</text>
</comment>
<comment type="catalytic activity">
    <reaction evidence="1">
        <text>dTTP + H2O = dTMP + diphosphate + H(+)</text>
        <dbReference type="Rhea" id="RHEA:28534"/>
        <dbReference type="ChEBI" id="CHEBI:15377"/>
        <dbReference type="ChEBI" id="CHEBI:15378"/>
        <dbReference type="ChEBI" id="CHEBI:33019"/>
        <dbReference type="ChEBI" id="CHEBI:37568"/>
        <dbReference type="ChEBI" id="CHEBI:63528"/>
        <dbReference type="EC" id="3.6.1.9"/>
    </reaction>
</comment>
<comment type="catalytic activity">
    <reaction evidence="1">
        <text>UTP + H2O = UMP + diphosphate + H(+)</text>
        <dbReference type="Rhea" id="RHEA:29395"/>
        <dbReference type="ChEBI" id="CHEBI:15377"/>
        <dbReference type="ChEBI" id="CHEBI:15378"/>
        <dbReference type="ChEBI" id="CHEBI:33019"/>
        <dbReference type="ChEBI" id="CHEBI:46398"/>
        <dbReference type="ChEBI" id="CHEBI:57865"/>
        <dbReference type="EC" id="3.6.1.9"/>
    </reaction>
</comment>
<comment type="cofactor">
    <cofactor evidence="1">
        <name>a divalent metal cation</name>
        <dbReference type="ChEBI" id="CHEBI:60240"/>
    </cofactor>
</comment>
<comment type="subcellular location">
    <subcellularLocation>
        <location evidence="1">Cytoplasm</location>
    </subcellularLocation>
</comment>
<comment type="similarity">
    <text evidence="1">Belongs to the Maf family. YhdE subfamily.</text>
</comment>
<organism>
    <name type="scientific">Clostridium novyi (strain NT)</name>
    <dbReference type="NCBI Taxonomy" id="386415"/>
    <lineage>
        <taxon>Bacteria</taxon>
        <taxon>Bacillati</taxon>
        <taxon>Bacillota</taxon>
        <taxon>Clostridia</taxon>
        <taxon>Eubacteriales</taxon>
        <taxon>Clostridiaceae</taxon>
        <taxon>Clostridium</taxon>
    </lineage>
</organism>
<feature type="chain" id="PRO_1000060938" description="dTTP/UTP pyrophosphatase">
    <location>
        <begin position="1"/>
        <end position="191"/>
    </location>
</feature>
<feature type="active site" description="Proton acceptor" evidence="1">
    <location>
        <position position="70"/>
    </location>
</feature>
<feature type="site" description="Important for substrate specificity" evidence="1">
    <location>
        <position position="11"/>
    </location>
</feature>
<feature type="site" description="Important for substrate specificity" evidence="1">
    <location>
        <position position="71"/>
    </location>
</feature>
<feature type="site" description="Important for substrate specificity" evidence="1">
    <location>
        <position position="155"/>
    </location>
</feature>